<evidence type="ECO:0000255" key="1">
    <source>
        <dbReference type="HAMAP-Rule" id="MF_00014"/>
    </source>
</evidence>
<accession>A8AXT7</accession>
<dbReference type="EMBL" id="CP000725">
    <property type="protein sequence ID" value="ABV10852.1"/>
    <property type="molecule type" value="Genomic_DNA"/>
</dbReference>
<dbReference type="RefSeq" id="WP_012000704.1">
    <property type="nucleotide sequence ID" value="NC_009785.1"/>
</dbReference>
<dbReference type="SMR" id="A8AXT7"/>
<dbReference type="STRING" id="467705.SGO_1316"/>
<dbReference type="KEGG" id="sgo:SGO_1316"/>
<dbReference type="eggNOG" id="COG0806">
    <property type="taxonomic scope" value="Bacteria"/>
</dbReference>
<dbReference type="HOGENOM" id="CLU_077636_3_1_9"/>
<dbReference type="Proteomes" id="UP000001131">
    <property type="component" value="Chromosome"/>
</dbReference>
<dbReference type="GO" id="GO:0005737">
    <property type="term" value="C:cytoplasm"/>
    <property type="evidence" value="ECO:0007669"/>
    <property type="project" value="UniProtKB-SubCell"/>
</dbReference>
<dbReference type="GO" id="GO:0005840">
    <property type="term" value="C:ribosome"/>
    <property type="evidence" value="ECO:0007669"/>
    <property type="project" value="InterPro"/>
</dbReference>
<dbReference type="GO" id="GO:0043022">
    <property type="term" value="F:ribosome binding"/>
    <property type="evidence" value="ECO:0007669"/>
    <property type="project" value="InterPro"/>
</dbReference>
<dbReference type="GO" id="GO:0042274">
    <property type="term" value="P:ribosomal small subunit biogenesis"/>
    <property type="evidence" value="ECO:0007669"/>
    <property type="project" value="UniProtKB-UniRule"/>
</dbReference>
<dbReference type="GO" id="GO:0006364">
    <property type="term" value="P:rRNA processing"/>
    <property type="evidence" value="ECO:0007669"/>
    <property type="project" value="UniProtKB-UniRule"/>
</dbReference>
<dbReference type="Gene3D" id="2.30.30.240">
    <property type="entry name" value="PRC-barrel domain"/>
    <property type="match status" value="1"/>
</dbReference>
<dbReference type="Gene3D" id="2.40.30.60">
    <property type="entry name" value="RimM"/>
    <property type="match status" value="1"/>
</dbReference>
<dbReference type="HAMAP" id="MF_00014">
    <property type="entry name" value="Ribosome_mat_RimM"/>
    <property type="match status" value="1"/>
</dbReference>
<dbReference type="InterPro" id="IPR027275">
    <property type="entry name" value="PRC-brl_dom"/>
</dbReference>
<dbReference type="InterPro" id="IPR011033">
    <property type="entry name" value="PRC_barrel-like_sf"/>
</dbReference>
<dbReference type="InterPro" id="IPR011961">
    <property type="entry name" value="RimM"/>
</dbReference>
<dbReference type="InterPro" id="IPR002676">
    <property type="entry name" value="RimM_N"/>
</dbReference>
<dbReference type="InterPro" id="IPR036976">
    <property type="entry name" value="RimM_N_sf"/>
</dbReference>
<dbReference type="InterPro" id="IPR009000">
    <property type="entry name" value="Transl_B-barrel_sf"/>
</dbReference>
<dbReference type="NCBIfam" id="TIGR02273">
    <property type="entry name" value="16S_RimM"/>
    <property type="match status" value="1"/>
</dbReference>
<dbReference type="PANTHER" id="PTHR33692">
    <property type="entry name" value="RIBOSOME MATURATION FACTOR RIMM"/>
    <property type="match status" value="1"/>
</dbReference>
<dbReference type="PANTHER" id="PTHR33692:SF1">
    <property type="entry name" value="RIBOSOME MATURATION FACTOR RIMM"/>
    <property type="match status" value="1"/>
</dbReference>
<dbReference type="Pfam" id="PF05239">
    <property type="entry name" value="PRC"/>
    <property type="match status" value="1"/>
</dbReference>
<dbReference type="Pfam" id="PF01782">
    <property type="entry name" value="RimM"/>
    <property type="match status" value="1"/>
</dbReference>
<dbReference type="SUPFAM" id="SSF50346">
    <property type="entry name" value="PRC-barrel domain"/>
    <property type="match status" value="1"/>
</dbReference>
<dbReference type="SUPFAM" id="SSF50447">
    <property type="entry name" value="Translation proteins"/>
    <property type="match status" value="1"/>
</dbReference>
<protein>
    <recommendedName>
        <fullName evidence="1">Ribosome maturation factor RimM</fullName>
    </recommendedName>
</protein>
<proteinExistence type="inferred from homology"/>
<gene>
    <name evidence="1" type="primary">rimM</name>
    <name type="ordered locus">SGO_1316</name>
</gene>
<keyword id="KW-0143">Chaperone</keyword>
<keyword id="KW-0963">Cytoplasm</keyword>
<keyword id="KW-1185">Reference proteome</keyword>
<keyword id="KW-0690">Ribosome biogenesis</keyword>
<keyword id="KW-0698">rRNA processing</keyword>
<comment type="function">
    <text evidence="1">An accessory protein needed during the final step in the assembly of 30S ribosomal subunit, possibly for assembly of the head region. Essential for efficient processing of 16S rRNA. May be needed both before and after RbfA during the maturation of 16S rRNA. It has affinity for free ribosomal 30S subunits but not for 70S ribosomes.</text>
</comment>
<comment type="subunit">
    <text evidence="1">Binds ribosomal protein uS19.</text>
</comment>
<comment type="subcellular location">
    <subcellularLocation>
        <location evidence="1">Cytoplasm</location>
    </subcellularLocation>
</comment>
<comment type="domain">
    <text evidence="1">The PRC barrel domain binds ribosomal protein uS19.</text>
</comment>
<comment type="similarity">
    <text evidence="1">Belongs to the RimM family.</text>
</comment>
<name>RIMM_STRGC</name>
<reference key="1">
    <citation type="journal article" date="2007" name="J. Bacteriol.">
        <title>Genome-wide transcriptional changes in Streptococcus gordonii in response to competence signaling peptide.</title>
        <authorList>
            <person name="Vickerman M.M."/>
            <person name="Iobst S."/>
            <person name="Jesionowski A.M."/>
            <person name="Gill S.R."/>
        </authorList>
    </citation>
    <scope>NUCLEOTIDE SEQUENCE [LARGE SCALE GENOMIC DNA]</scope>
    <source>
        <strain>Challis / ATCC 35105 / BCRC 15272 / CH1 / DL1 / V288</strain>
    </source>
</reference>
<organism>
    <name type="scientific">Streptococcus gordonii (strain Challis / ATCC 35105 / BCRC 15272 / CH1 / DL1 / V288)</name>
    <dbReference type="NCBI Taxonomy" id="467705"/>
    <lineage>
        <taxon>Bacteria</taxon>
        <taxon>Bacillati</taxon>
        <taxon>Bacillota</taxon>
        <taxon>Bacilli</taxon>
        <taxon>Lactobacillales</taxon>
        <taxon>Streptococcaceae</taxon>
        <taxon>Streptococcus</taxon>
    </lineage>
</organism>
<feature type="chain" id="PRO_1000074046" description="Ribosome maturation factor RimM">
    <location>
        <begin position="1"/>
        <end position="172"/>
    </location>
</feature>
<feature type="domain" description="PRC barrel" evidence="1">
    <location>
        <begin position="96"/>
        <end position="168"/>
    </location>
</feature>
<sequence length="172" mass="19812">MNYFNVGKIVNTQGLQGEMRVLSVTDFAEERFKKGNTLALFDKKDQFVMDVEIASHRKVKNFDIIKFKGMYHINAIEKFRDFSLKVAEEDLSDLEEGEFYYHEIIGLEVYENDVLLGTIKEILQPGANDVWVVKRKGKRDLLLPYIPPVVLGIDIEQGRVDVEIPEGLDDEN</sequence>